<gene>
    <name type="ordered locus">BQ2027_MB2001C</name>
</gene>
<sequence length="481" mass="51058">MVGPRTRGYAIHKLGFCSVVMLGINSIIGAGIFLTPGEVIGLAGPFAPMAYVLAGIFAGVVAIVFATAARYVRTNGASYAYTTAAFGRRIGIYVGVTHAITASIAWGVLASFFVSTLLRVAFPDKAWADAEQLFSVKTLTFLGFIGVLLAINLFGNRAIKWANGTSTVGKAFALSAFIVGGLWIITTQHVNNYATAWSAYSATPYSLLGVAEIGKGTFSSMALATIVALYAFTGFESIANAAEEMDAPDRNLPRAIPIAIFSVGAIYLLTLTVAMLLGSNKIAASGDTVKLAAAIGNATFRTIIVVGALISMFGINVAASFGAPRLWTALADSGVLPTRLSRKNQYDVPMVSFAITASLALAFPLALRFDNLHLTGLAVIARFVQFIIVPIALIALARSQAVEHAAVRRNAFTDKVLPLVAIVVSVGLAVSYDYRCIFLVRGGPNYFSIALIVITFIVVPAMAYLHYYRIIRRVGDRPSTR</sequence>
<protein>
    <recommendedName>
        <fullName>Uncharacterized transporter Mb2001c</fullName>
    </recommendedName>
</protein>
<dbReference type="EMBL" id="LT708304">
    <property type="protein sequence ID" value="SIU00606.1"/>
    <property type="molecule type" value="Genomic_DNA"/>
</dbReference>
<dbReference type="RefSeq" id="NP_855651.1">
    <property type="nucleotide sequence ID" value="NC_002945.3"/>
</dbReference>
<dbReference type="RefSeq" id="WP_003409946.1">
    <property type="nucleotide sequence ID" value="NC_002945.4"/>
</dbReference>
<dbReference type="SMR" id="Q7TZ67"/>
<dbReference type="KEGG" id="mbo:BQ2027_MB2001C"/>
<dbReference type="PATRIC" id="fig|233413.5.peg.2197"/>
<dbReference type="Proteomes" id="UP000001419">
    <property type="component" value="Chromosome"/>
</dbReference>
<dbReference type="GO" id="GO:0005886">
    <property type="term" value="C:plasma membrane"/>
    <property type="evidence" value="ECO:0007669"/>
    <property type="project" value="UniProtKB-SubCell"/>
</dbReference>
<dbReference type="GO" id="GO:0022857">
    <property type="term" value="F:transmembrane transporter activity"/>
    <property type="evidence" value="ECO:0007669"/>
    <property type="project" value="InterPro"/>
</dbReference>
<dbReference type="Gene3D" id="1.20.1740.10">
    <property type="entry name" value="Amino acid/polyamine transporter I"/>
    <property type="match status" value="1"/>
</dbReference>
<dbReference type="InterPro" id="IPR002293">
    <property type="entry name" value="AA/rel_permease1"/>
</dbReference>
<dbReference type="InterPro" id="IPR050367">
    <property type="entry name" value="APC_superfamily"/>
</dbReference>
<dbReference type="PANTHER" id="PTHR42770">
    <property type="entry name" value="AMINO ACID TRANSPORTER-RELATED"/>
    <property type="match status" value="1"/>
</dbReference>
<dbReference type="PANTHER" id="PTHR42770:SF18">
    <property type="entry name" value="ARGININE_AGMATINE ANTIPORTER"/>
    <property type="match status" value="1"/>
</dbReference>
<dbReference type="Pfam" id="PF13520">
    <property type="entry name" value="AA_permease_2"/>
    <property type="match status" value="1"/>
</dbReference>
<dbReference type="PIRSF" id="PIRSF006060">
    <property type="entry name" value="AA_transporter"/>
    <property type="match status" value="1"/>
</dbReference>
<proteinExistence type="inferred from homology"/>
<name>Y2001_MYCBO</name>
<accession>Q7TZ67</accession>
<accession>A0A1R3XZV9</accession>
<accession>X2BJP4</accession>
<keyword id="KW-1003">Cell membrane</keyword>
<keyword id="KW-0472">Membrane</keyword>
<keyword id="KW-1185">Reference proteome</keyword>
<keyword id="KW-0812">Transmembrane</keyword>
<keyword id="KW-1133">Transmembrane helix</keyword>
<keyword id="KW-0813">Transport</keyword>
<evidence type="ECO:0000255" key="1"/>
<evidence type="ECO:0000305" key="2"/>
<feature type="chain" id="PRO_0000054224" description="Uncharacterized transporter Mb2001c">
    <location>
        <begin position="1"/>
        <end position="481"/>
    </location>
</feature>
<feature type="transmembrane region" description="Helical" evidence="1">
    <location>
        <begin position="14"/>
        <end position="34"/>
    </location>
</feature>
<feature type="transmembrane region" description="Helical" evidence="1">
    <location>
        <begin position="46"/>
        <end position="66"/>
    </location>
</feature>
<feature type="transmembrane region" description="Helical" evidence="1">
    <location>
        <begin position="90"/>
        <end position="110"/>
    </location>
</feature>
<feature type="transmembrane region" description="Helical" evidence="1">
    <location>
        <begin position="134"/>
        <end position="154"/>
    </location>
</feature>
<feature type="transmembrane region" description="Helical" evidence="1">
    <location>
        <begin position="167"/>
        <end position="187"/>
    </location>
</feature>
<feature type="transmembrane region" description="Helical" evidence="1">
    <location>
        <begin position="218"/>
        <end position="238"/>
    </location>
</feature>
<feature type="transmembrane region" description="Helical" evidence="1">
    <location>
        <begin position="258"/>
        <end position="278"/>
    </location>
</feature>
<feature type="transmembrane region" description="Helical" evidence="1">
    <location>
        <begin position="303"/>
        <end position="323"/>
    </location>
</feature>
<feature type="transmembrane region" description="Helical" evidence="1">
    <location>
        <begin position="377"/>
        <end position="397"/>
    </location>
</feature>
<feature type="transmembrane region" description="Helical" evidence="1">
    <location>
        <begin position="411"/>
        <end position="431"/>
    </location>
</feature>
<feature type="transmembrane region" description="Helical" evidence="1">
    <location>
        <begin position="446"/>
        <end position="466"/>
    </location>
</feature>
<reference key="1">
    <citation type="journal article" date="2003" name="Proc. Natl. Acad. Sci. U.S.A.">
        <title>The complete genome sequence of Mycobacterium bovis.</title>
        <authorList>
            <person name="Garnier T."/>
            <person name="Eiglmeier K."/>
            <person name="Camus J.-C."/>
            <person name="Medina N."/>
            <person name="Mansoor H."/>
            <person name="Pryor M."/>
            <person name="Duthoy S."/>
            <person name="Grondin S."/>
            <person name="Lacroix C."/>
            <person name="Monsempe C."/>
            <person name="Simon S."/>
            <person name="Harris B."/>
            <person name="Atkin R."/>
            <person name="Doggett J."/>
            <person name="Mayes R."/>
            <person name="Keating L."/>
            <person name="Wheeler P.R."/>
            <person name="Parkhill J."/>
            <person name="Barrell B.G."/>
            <person name="Cole S.T."/>
            <person name="Gordon S.V."/>
            <person name="Hewinson R.G."/>
        </authorList>
    </citation>
    <scope>NUCLEOTIDE SEQUENCE [LARGE SCALE GENOMIC DNA]</scope>
    <source>
        <strain>ATCC BAA-935 / AF2122/97</strain>
    </source>
</reference>
<reference key="2">
    <citation type="journal article" date="2017" name="Genome Announc.">
        <title>Updated reference genome sequence and annotation of Mycobacterium bovis AF2122/97.</title>
        <authorList>
            <person name="Malone K.M."/>
            <person name="Farrell D."/>
            <person name="Stuber T.P."/>
            <person name="Schubert O.T."/>
            <person name="Aebersold R."/>
            <person name="Robbe-Austerman S."/>
            <person name="Gordon S.V."/>
        </authorList>
    </citation>
    <scope>NUCLEOTIDE SEQUENCE [LARGE SCALE GENOMIC DNA]</scope>
    <scope>GENOME REANNOTATION</scope>
    <source>
        <strain>ATCC BAA-935 / AF2122/97</strain>
    </source>
</reference>
<organism>
    <name type="scientific">Mycobacterium bovis (strain ATCC BAA-935 / AF2122/97)</name>
    <dbReference type="NCBI Taxonomy" id="233413"/>
    <lineage>
        <taxon>Bacteria</taxon>
        <taxon>Bacillati</taxon>
        <taxon>Actinomycetota</taxon>
        <taxon>Actinomycetes</taxon>
        <taxon>Mycobacteriales</taxon>
        <taxon>Mycobacteriaceae</taxon>
        <taxon>Mycobacterium</taxon>
        <taxon>Mycobacterium tuberculosis complex</taxon>
    </lineage>
</organism>
<comment type="function">
    <text>Probable amino-acid or metabolite transport protein.</text>
</comment>
<comment type="subcellular location">
    <subcellularLocation>
        <location evidence="2">Cell membrane</location>
        <topology evidence="2">Multi-pass membrane protein</topology>
    </subcellularLocation>
</comment>
<comment type="similarity">
    <text evidence="2">Belongs to the amino acid-polyamine-organocation (APC) superfamily.</text>
</comment>